<organism>
    <name type="scientific">Saccharomyces cerevisiae (strain ATCC 204508 / S288c)</name>
    <name type="common">Baker's yeast</name>
    <dbReference type="NCBI Taxonomy" id="559292"/>
    <lineage>
        <taxon>Eukaryota</taxon>
        <taxon>Fungi</taxon>
        <taxon>Dikarya</taxon>
        <taxon>Ascomycota</taxon>
        <taxon>Saccharomycotina</taxon>
        <taxon>Saccharomycetes</taxon>
        <taxon>Saccharomycetales</taxon>
        <taxon>Saccharomycetaceae</taxon>
        <taxon>Saccharomyces</taxon>
    </lineage>
</organism>
<dbReference type="EC" id="2.7.11.1"/>
<dbReference type="EMBL" id="X59720">
    <property type="protein sequence ID" value="CAA42271.2"/>
    <property type="molecule type" value="Genomic_DNA"/>
</dbReference>
<dbReference type="EMBL" id="BK006937">
    <property type="protein sequence ID" value="DAA07544.1"/>
    <property type="molecule type" value="Genomic_DNA"/>
</dbReference>
<dbReference type="PIR" id="S19488">
    <property type="entry name" value="S19488"/>
</dbReference>
<dbReference type="RefSeq" id="NP_009998.2">
    <property type="nucleotide sequence ID" value="NM_001178783.1"/>
</dbReference>
<dbReference type="SMR" id="P25390"/>
<dbReference type="BioGRID" id="31048">
    <property type="interactions" value="97"/>
</dbReference>
<dbReference type="DIP" id="DIP-5989N"/>
<dbReference type="FunCoup" id="P25390">
    <property type="interactions" value="353"/>
</dbReference>
<dbReference type="IntAct" id="P25390">
    <property type="interactions" value="12"/>
</dbReference>
<dbReference type="MINT" id="P25390"/>
<dbReference type="STRING" id="4932.YCR073C"/>
<dbReference type="iPTMnet" id="P25390"/>
<dbReference type="PaxDb" id="4932-YCR073C"/>
<dbReference type="PeptideAtlas" id="P25390"/>
<dbReference type="EnsemblFungi" id="YCR073C_mRNA">
    <property type="protein sequence ID" value="YCR073C"/>
    <property type="gene ID" value="YCR073C"/>
</dbReference>
<dbReference type="GeneID" id="850436"/>
<dbReference type="KEGG" id="sce:YCR073C"/>
<dbReference type="AGR" id="SGD:S000000669"/>
<dbReference type="SGD" id="S000000669">
    <property type="gene designation" value="SSK22"/>
</dbReference>
<dbReference type="VEuPathDB" id="FungiDB:YCR073C"/>
<dbReference type="eggNOG" id="KOG4645">
    <property type="taxonomic scope" value="Eukaryota"/>
</dbReference>
<dbReference type="GeneTree" id="ENSGT00940000176701"/>
<dbReference type="HOGENOM" id="CLU_001999_2_0_1"/>
<dbReference type="InParanoid" id="P25390"/>
<dbReference type="OMA" id="CYALEYQ"/>
<dbReference type="OrthoDB" id="1043025at2759"/>
<dbReference type="BioCyc" id="YEAST:G3O-29373-MONOMER"/>
<dbReference type="BioGRID-ORCS" id="850436">
    <property type="hits" value="0 hits in 13 CRISPR screens"/>
</dbReference>
<dbReference type="PRO" id="PR:P25390"/>
<dbReference type="Proteomes" id="UP000002311">
    <property type="component" value="Chromosome III"/>
</dbReference>
<dbReference type="RNAct" id="P25390">
    <property type="molecule type" value="protein"/>
</dbReference>
<dbReference type="GO" id="GO:0005737">
    <property type="term" value="C:cytoplasm"/>
    <property type="evidence" value="ECO:0007669"/>
    <property type="project" value="InterPro"/>
</dbReference>
<dbReference type="GO" id="GO:0005524">
    <property type="term" value="F:ATP binding"/>
    <property type="evidence" value="ECO:0007669"/>
    <property type="project" value="UniProtKB-KW"/>
</dbReference>
<dbReference type="GO" id="GO:0004709">
    <property type="term" value="F:MAP kinase kinase kinase activity"/>
    <property type="evidence" value="ECO:0000250"/>
    <property type="project" value="SGD"/>
</dbReference>
<dbReference type="GO" id="GO:0004672">
    <property type="term" value="F:protein kinase activity"/>
    <property type="evidence" value="ECO:0007005"/>
    <property type="project" value="SGD"/>
</dbReference>
<dbReference type="GO" id="GO:0106310">
    <property type="term" value="F:protein serine kinase activity"/>
    <property type="evidence" value="ECO:0007669"/>
    <property type="project" value="RHEA"/>
</dbReference>
<dbReference type="GO" id="GO:0038066">
    <property type="term" value="P:p38MAPK cascade"/>
    <property type="evidence" value="ECO:0000315"/>
    <property type="project" value="SGD"/>
</dbReference>
<dbReference type="GO" id="GO:0051403">
    <property type="term" value="P:stress-activated MAPK cascade"/>
    <property type="evidence" value="ECO:0007669"/>
    <property type="project" value="InterPro"/>
</dbReference>
<dbReference type="CDD" id="cd06626">
    <property type="entry name" value="STKc_MEKK4"/>
    <property type="match status" value="1"/>
</dbReference>
<dbReference type="FunFam" id="1.10.510.10:FF:000482">
    <property type="entry name" value="MAP kinase kinase kinase"/>
    <property type="match status" value="1"/>
</dbReference>
<dbReference type="Gene3D" id="1.10.510.10">
    <property type="entry name" value="Transferase(Phosphotransferase) domain 1"/>
    <property type="match status" value="1"/>
</dbReference>
<dbReference type="InterPro" id="IPR011009">
    <property type="entry name" value="Kinase-like_dom_sf"/>
</dbReference>
<dbReference type="InterPro" id="IPR050538">
    <property type="entry name" value="MAP_kinase_kinase_kinase"/>
</dbReference>
<dbReference type="InterPro" id="IPR017240">
    <property type="entry name" value="MAPKKK_Ssk2/Ssk22"/>
</dbReference>
<dbReference type="InterPro" id="IPR000719">
    <property type="entry name" value="Prot_kinase_dom"/>
</dbReference>
<dbReference type="InterPro" id="IPR017441">
    <property type="entry name" value="Protein_kinase_ATP_BS"/>
</dbReference>
<dbReference type="InterPro" id="IPR008271">
    <property type="entry name" value="Ser/Thr_kinase_AS"/>
</dbReference>
<dbReference type="PANTHER" id="PTHR48016">
    <property type="entry name" value="MAP KINASE KINASE KINASE SSK2-RELATED-RELATED"/>
    <property type="match status" value="1"/>
</dbReference>
<dbReference type="PANTHER" id="PTHR48016:SF32">
    <property type="entry name" value="MITOGEN-ACTIVATED PROTEIN KINASE KINASE KINASE 4"/>
    <property type="match status" value="1"/>
</dbReference>
<dbReference type="Pfam" id="PF00069">
    <property type="entry name" value="Pkinase"/>
    <property type="match status" value="1"/>
</dbReference>
<dbReference type="PIRSF" id="PIRSF037579">
    <property type="entry name" value="MAPKKK_SSK22"/>
    <property type="match status" value="1"/>
</dbReference>
<dbReference type="SMART" id="SM00220">
    <property type="entry name" value="S_TKc"/>
    <property type="match status" value="1"/>
</dbReference>
<dbReference type="SUPFAM" id="SSF56112">
    <property type="entry name" value="Protein kinase-like (PK-like)"/>
    <property type="match status" value="1"/>
</dbReference>
<dbReference type="PROSITE" id="PS00107">
    <property type="entry name" value="PROTEIN_KINASE_ATP"/>
    <property type="match status" value="1"/>
</dbReference>
<dbReference type="PROSITE" id="PS50011">
    <property type="entry name" value="PROTEIN_KINASE_DOM"/>
    <property type="match status" value="1"/>
</dbReference>
<dbReference type="PROSITE" id="PS00108">
    <property type="entry name" value="PROTEIN_KINASE_ST"/>
    <property type="match status" value="1"/>
</dbReference>
<reference key="1">
    <citation type="journal article" date="1992" name="Nature">
        <title>The complete DNA sequence of yeast chromosome III.</title>
        <authorList>
            <person name="Oliver S.G."/>
            <person name="van der Aart Q.J.M."/>
            <person name="Agostoni-Carbone M.L."/>
            <person name="Aigle M."/>
            <person name="Alberghina L."/>
            <person name="Alexandraki D."/>
            <person name="Antoine G."/>
            <person name="Anwar R."/>
            <person name="Ballesta J.P.G."/>
            <person name="Benit P."/>
            <person name="Berben G."/>
            <person name="Bergantino E."/>
            <person name="Biteau N."/>
            <person name="Bolle P.-A."/>
            <person name="Bolotin-Fukuhara M."/>
            <person name="Brown A."/>
            <person name="Brown A.J.P."/>
            <person name="Buhler J.-M."/>
            <person name="Carcano C."/>
            <person name="Carignani G."/>
            <person name="Cederberg H."/>
            <person name="Chanet R."/>
            <person name="Contreras R."/>
            <person name="Crouzet M."/>
            <person name="Daignan-Fornier B."/>
            <person name="Defoor E."/>
            <person name="Delgado M.D."/>
            <person name="Demolder J."/>
            <person name="Doira C."/>
            <person name="Dubois E."/>
            <person name="Dujon B."/>
            <person name="Duesterhoeft A."/>
            <person name="Erdmann D."/>
            <person name="Esteban M."/>
            <person name="Fabre F."/>
            <person name="Fairhead C."/>
            <person name="Faye G."/>
            <person name="Feldmann H."/>
            <person name="Fiers W."/>
            <person name="Francingues-Gaillard M.-C."/>
            <person name="Franco L."/>
            <person name="Frontali L."/>
            <person name="Fukuhara H."/>
            <person name="Fuller L.J."/>
            <person name="Galland P."/>
            <person name="Gent M.E."/>
            <person name="Gigot D."/>
            <person name="Gilliquet V."/>
            <person name="Glansdorff N."/>
            <person name="Goffeau A."/>
            <person name="Grenson M."/>
            <person name="Grisanti P."/>
            <person name="Grivell L.A."/>
            <person name="de Haan M."/>
            <person name="Haasemann M."/>
            <person name="Hatat D."/>
            <person name="Hoenicka J."/>
            <person name="Hegemann J.H."/>
            <person name="Herbert C.J."/>
            <person name="Hilger F."/>
            <person name="Hohmann S."/>
            <person name="Hollenberg C.P."/>
            <person name="Huse K."/>
            <person name="Iborra F."/>
            <person name="Indge K.J."/>
            <person name="Isono K."/>
            <person name="Jacq C."/>
            <person name="Jacquet M."/>
            <person name="James C.M."/>
            <person name="Jauniaux J.-C."/>
            <person name="Jia Y."/>
            <person name="Jimenez A."/>
            <person name="Kelly A."/>
            <person name="Kleinhans U."/>
            <person name="Kreisl P."/>
            <person name="Lanfranchi G."/>
            <person name="Lewis C."/>
            <person name="van der Linden C.G."/>
            <person name="Lucchini G."/>
            <person name="Lutzenkirchen K."/>
            <person name="Maat M.J."/>
            <person name="Mallet L."/>
            <person name="Mannhaupt G."/>
            <person name="Martegani E."/>
            <person name="Mathieu A."/>
            <person name="Maurer C.T.C."/>
            <person name="McConnell D."/>
            <person name="McKee R.A."/>
            <person name="Messenguy F."/>
            <person name="Mewes H.-W."/>
            <person name="Molemans F."/>
            <person name="Montague M.A."/>
            <person name="Muzi Falconi M."/>
            <person name="Navas L."/>
            <person name="Newlon C.S."/>
            <person name="Noone D."/>
            <person name="Pallier C."/>
            <person name="Panzeri L."/>
            <person name="Pearson B.M."/>
            <person name="Perea J."/>
            <person name="Philippsen P."/>
            <person name="Pierard A."/>
            <person name="Planta R.J."/>
            <person name="Plevani P."/>
            <person name="Poetsch B."/>
            <person name="Pohl F.M."/>
            <person name="Purnelle B."/>
            <person name="Ramezani Rad M."/>
            <person name="Rasmussen S.W."/>
            <person name="Raynal A."/>
            <person name="Remacha M.A."/>
            <person name="Richterich P."/>
            <person name="Roberts A.B."/>
            <person name="Rodriguez F."/>
            <person name="Sanz E."/>
            <person name="Schaaff-Gerstenschlaeger I."/>
            <person name="Scherens B."/>
            <person name="Schweitzer B."/>
            <person name="Shu Y."/>
            <person name="Skala J."/>
            <person name="Slonimski P.P."/>
            <person name="Sor F."/>
            <person name="Soustelle C."/>
            <person name="Spiegelberg R."/>
            <person name="Stateva L.I."/>
            <person name="Steensma H.Y."/>
            <person name="Steiner S."/>
            <person name="Thierry A."/>
            <person name="Thireos G."/>
            <person name="Tzermia M."/>
            <person name="Urrestarazu L.A."/>
            <person name="Valle G."/>
            <person name="Vetter I."/>
            <person name="van Vliet-Reedijk J.C."/>
            <person name="Voet M."/>
            <person name="Volckaert G."/>
            <person name="Vreken P."/>
            <person name="Wang H."/>
            <person name="Warmington J.R."/>
            <person name="von Wettstein D."/>
            <person name="Wicksteed B.L."/>
            <person name="Wilson C."/>
            <person name="Wurst H."/>
            <person name="Xu G."/>
            <person name="Yoshikawa A."/>
            <person name="Zimmermann F.K."/>
            <person name="Sgouros J.G."/>
        </authorList>
    </citation>
    <scope>NUCLEOTIDE SEQUENCE [LARGE SCALE GENOMIC DNA]</scope>
    <source>
        <strain>ATCC 204508 / S288c</strain>
    </source>
</reference>
<reference key="2">
    <citation type="submission" date="2001-06" db="EMBL/GenBank/DDBJ databases">
        <authorList>
            <person name="Valles G."/>
            <person name="Volckaerts G."/>
        </authorList>
    </citation>
    <scope>SEQUENCE REVISION TO C-TERMINUS</scope>
</reference>
<reference key="3">
    <citation type="journal article" date="2014" name="G3 (Bethesda)">
        <title>The reference genome sequence of Saccharomyces cerevisiae: Then and now.</title>
        <authorList>
            <person name="Engel S.R."/>
            <person name="Dietrich F.S."/>
            <person name="Fisk D.G."/>
            <person name="Binkley G."/>
            <person name="Balakrishnan R."/>
            <person name="Costanzo M.C."/>
            <person name="Dwight S.S."/>
            <person name="Hitz B.C."/>
            <person name="Karra K."/>
            <person name="Nash R.S."/>
            <person name="Weng S."/>
            <person name="Wong E.D."/>
            <person name="Lloyd P."/>
            <person name="Skrzypek M.S."/>
            <person name="Miyasato S.R."/>
            <person name="Simison M."/>
            <person name="Cherry J.M."/>
        </authorList>
    </citation>
    <scope>GENOME REANNOTATION</scope>
    <source>
        <strain>ATCC 204508 / S288c</strain>
    </source>
</reference>
<reference key="4">
    <citation type="journal article" date="1995" name="Science">
        <title>Activation of yeast PBS2 MAPKK by MAPKKKs or by binding of an SH3-containing osmosensor.</title>
        <authorList>
            <person name="Maeda T."/>
            <person name="Takekawa M."/>
            <person name="Saito H."/>
        </authorList>
    </citation>
    <scope>CHARACTERIZATION</scope>
</reference>
<reference key="5">
    <citation type="journal article" date="2003" name="Nature">
        <title>Global analysis of protein expression in yeast.</title>
        <authorList>
            <person name="Ghaemmaghami S."/>
            <person name="Huh W.-K."/>
            <person name="Bower K."/>
            <person name="Howson R.W."/>
            <person name="Belle A."/>
            <person name="Dephoure N."/>
            <person name="O'Shea E.K."/>
            <person name="Weissman J.S."/>
        </authorList>
    </citation>
    <scope>LEVEL OF PROTEIN EXPRESSION [LARGE SCALE ANALYSIS]</scope>
</reference>
<evidence type="ECO:0000255" key="1">
    <source>
        <dbReference type="PROSITE-ProRule" id="PRU00159"/>
    </source>
</evidence>
<evidence type="ECO:0000255" key="2">
    <source>
        <dbReference type="PROSITE-ProRule" id="PRU10027"/>
    </source>
</evidence>
<evidence type="ECO:0000269" key="3">
    <source>
    </source>
</evidence>
<evidence type="ECO:0000305" key="4"/>
<accession>P25390</accession>
<accession>D6VR75</accession>
<keyword id="KW-0067">ATP-binding</keyword>
<keyword id="KW-0418">Kinase</keyword>
<keyword id="KW-0547">Nucleotide-binding</keyword>
<keyword id="KW-1185">Reference proteome</keyword>
<keyword id="KW-0723">Serine/threonine-protein kinase</keyword>
<keyword id="KW-0808">Transferase</keyword>
<name>SSK22_YEAST</name>
<feature type="chain" id="PRO_0000086681" description="Serine/threonine-protein kinase SSK22">
    <location>
        <begin position="1"/>
        <end position="1331"/>
    </location>
</feature>
<feature type="domain" description="Protein kinase" evidence="1">
    <location>
        <begin position="1034"/>
        <end position="1310"/>
    </location>
</feature>
<feature type="active site" description="Proton acceptor" evidence="1 2">
    <location>
        <position position="1158"/>
    </location>
</feature>
<feature type="binding site" evidence="1">
    <location>
        <begin position="1040"/>
        <end position="1048"/>
    </location>
    <ligand>
        <name>ATP</name>
        <dbReference type="ChEBI" id="CHEBI:30616"/>
    </ligand>
</feature>
<feature type="binding site" evidence="1">
    <location>
        <position position="1063"/>
    </location>
    <ligand>
        <name>ATP</name>
        <dbReference type="ChEBI" id="CHEBI:30616"/>
    </ligand>
</feature>
<proteinExistence type="evidence at protein level"/>
<protein>
    <recommendedName>
        <fullName>Serine/threonine-protein kinase SSK22</fullName>
        <ecNumber>2.7.11.1</ecNumber>
    </recommendedName>
    <alternativeName>
        <fullName>MAP kinase kinase kinase SSK22</fullName>
    </alternativeName>
    <alternativeName>
        <fullName>Suppressor of sensor kinase 22</fullName>
    </alternativeName>
</protein>
<comment type="function">
    <text>Kinase involved in a signal transduction pathway that is activated by changes in the osmolarity of the extracellular environment. Activates the PBS2 MAP kinase kinase by phosphorylation.</text>
</comment>
<comment type="catalytic activity">
    <reaction>
        <text>L-seryl-[protein] + ATP = O-phospho-L-seryl-[protein] + ADP + H(+)</text>
        <dbReference type="Rhea" id="RHEA:17989"/>
        <dbReference type="Rhea" id="RHEA-COMP:9863"/>
        <dbReference type="Rhea" id="RHEA-COMP:11604"/>
        <dbReference type="ChEBI" id="CHEBI:15378"/>
        <dbReference type="ChEBI" id="CHEBI:29999"/>
        <dbReference type="ChEBI" id="CHEBI:30616"/>
        <dbReference type="ChEBI" id="CHEBI:83421"/>
        <dbReference type="ChEBI" id="CHEBI:456216"/>
        <dbReference type="EC" id="2.7.11.1"/>
    </reaction>
</comment>
<comment type="catalytic activity">
    <reaction>
        <text>L-threonyl-[protein] + ATP = O-phospho-L-threonyl-[protein] + ADP + H(+)</text>
        <dbReference type="Rhea" id="RHEA:46608"/>
        <dbReference type="Rhea" id="RHEA-COMP:11060"/>
        <dbReference type="Rhea" id="RHEA-COMP:11605"/>
        <dbReference type="ChEBI" id="CHEBI:15378"/>
        <dbReference type="ChEBI" id="CHEBI:30013"/>
        <dbReference type="ChEBI" id="CHEBI:30616"/>
        <dbReference type="ChEBI" id="CHEBI:61977"/>
        <dbReference type="ChEBI" id="CHEBI:456216"/>
        <dbReference type="EC" id="2.7.11.1"/>
    </reaction>
</comment>
<comment type="subunit">
    <text>Interacts with by SSK1.</text>
</comment>
<comment type="interaction">
    <interactant intactId="EBI-18129">
        <id>P25390</id>
    </interactant>
    <interactant intactId="EBI-18184">
        <id>Q07084</id>
        <label>SSK1</label>
    </interactant>
    <organismsDiffer>false</organismsDiffer>
    <experiments>5</experiments>
</comment>
<comment type="miscellaneous">
    <text evidence="3">Present with 56 molecules/cell in log phase SD medium.</text>
</comment>
<comment type="similarity">
    <text evidence="4">Belongs to the protein kinase superfamily. STE Ser/Thr protein kinase family. MAP kinase kinase kinase subfamily.</text>
</comment>
<sequence length="1331" mass="152718">MMMDILNTQQQKAAEGGRVLAPHTISSKLVKRLSSHSSHKLSRSDLKALGGSETISDGPSQLTFKDRYVFNESLYLKKLKKTALDDYYTRGIKLTNRYEEDDGDDEIIRLSNGDRIDEDLHSGVKFFSTTPYCRKMRSDSDELAWNEIATERFKWQSMLARVLKGDIVKGEKTRIANQVKKPGLNKELSDEIWLELKAWLNGRTMQEMEQSLTYLRDSSDSVFEEIMKFQIPQGKILSLDALEAILQDLMNRYHSVVSYWPNLKKMYKDKPITNTAEFTARIDVMNSWLNFKTNLTLRRQELDDWINRFSPISSSDNCQEDFDGVPQWNCKMKILAEQLMKEKNIESIFQKKIFYPLSPWMFKLKLHFIVYRETLTKMNIKYPYERLRSLLAFPVYLIKEVILTRLSYARKLKNPTMMMIDQMIDDFNAFIRLSVQLKYTLTKYCSNLPFDVDFDPTFENTVIEAIRYLFFLLNLKLIDSSKQNFKAPDLLLKYWDHLKNTGHYINGAETVIPNEFLKLTLRLVHKLQFYLLKQQNFPPTFANASEAEKWLSSIFENLGAMKRKLNRFSNILVKAFQNSAVYQINHNAQLVKKLKDAHYFLVYSGNTFESSGVYMFAAPELLGCDNDTILRILRNKSIGCDLVPKLDIGNNLNVYDITTKETDLNILVSKGEDSKGIPYYRVVANSSSDLDRHAHQSKKKNFSTDPFDQHLDEKNNEVFELEVALSSLGALVVLYPGEPVVWDGPVYKLPGNNLFASNEMDLGKIGNPNTLILLNQGSNYALTYQIDKFNQTVGDSVSFIEKRCSLNSIESSLQKINKAYYKLTYTVLNNYKGILGSFMKQCPGNELLNSIFMFGRDFGRSFLKYNAFSSKRKYVIIFLMVKLGMNWLKFLVEECDPTDQRTFRWCVLAMDFAMQMTSGYNILALNVKQFQELKERVSVCMSLLISHFDVMGARATEAENGMQQARLNIDTEENIDEEATLEINSRLRLEAIKTLEKTMKRNPRQMGKVLDATDQGNKYLLSLASSLSNVSMRWQKRSFIGGGTFGQVYSAINLENGEILAVKEIKIHDTTTMKKIFPLIKEEMTVLEMLNHPNIVQYYGVEVHRDKVNIFMEYCEGGSLASLLDHGRIEDEMVTQVYTFELLEGLAYLHQSGVVHRDIKPENILLDFNGIIKYVDFGTARTVVGSRTRTVRNAAVQDFGVETKSLNEMMGTPMYMAPETISGSAVKGKLGADDVWALGCVVLEMATGRRPWSNLDNEWAIMYHVAAGRIPQLPNRDEMTAAGRAFLERCLVQDPTMRATAVELLIDPWMIQIREIAFGNSEKDQVPILSS</sequence>
<gene>
    <name type="primary">SSK22</name>
    <name type="ordered locus">YCR073C</name>
    <name type="ORF">YCR73C</name>
</gene>